<protein>
    <recommendedName>
        <fullName evidence="1">Large ribosomal subunit protein uL22</fullName>
    </recommendedName>
    <alternativeName>
        <fullName evidence="2">50S ribosomal protein L22</fullName>
    </alternativeName>
</protein>
<proteinExistence type="inferred from homology"/>
<gene>
    <name evidence="1" type="primary">rplV</name>
    <name type="ordered locus">cgR_0613</name>
</gene>
<evidence type="ECO:0000255" key="1">
    <source>
        <dbReference type="HAMAP-Rule" id="MF_01331"/>
    </source>
</evidence>
<evidence type="ECO:0000305" key="2"/>
<keyword id="KW-0687">Ribonucleoprotein</keyword>
<keyword id="KW-0689">Ribosomal protein</keyword>
<keyword id="KW-0694">RNA-binding</keyword>
<keyword id="KW-0699">rRNA-binding</keyword>
<sequence>MSDNITSASATARFVRVSPMKARRVIDLVRGKTVVEALSILKYAPQAASEPVAKVVASAAANAENNFGLDPRTLVISEAYANEGPTMKRFQPRAQGRAFQIRKRSSHITVVVESQKEGAN</sequence>
<accession>A4QBI6</accession>
<name>RL22_CORGB</name>
<organism>
    <name type="scientific">Corynebacterium glutamicum (strain R)</name>
    <dbReference type="NCBI Taxonomy" id="340322"/>
    <lineage>
        <taxon>Bacteria</taxon>
        <taxon>Bacillati</taxon>
        <taxon>Actinomycetota</taxon>
        <taxon>Actinomycetes</taxon>
        <taxon>Mycobacteriales</taxon>
        <taxon>Corynebacteriaceae</taxon>
        <taxon>Corynebacterium</taxon>
    </lineage>
</organism>
<reference key="1">
    <citation type="journal article" date="2007" name="Microbiology">
        <title>Comparative analysis of the Corynebacterium glutamicum group and complete genome sequence of strain R.</title>
        <authorList>
            <person name="Yukawa H."/>
            <person name="Omumasaba C.A."/>
            <person name="Nonaka H."/>
            <person name="Kos P."/>
            <person name="Okai N."/>
            <person name="Suzuki N."/>
            <person name="Suda M."/>
            <person name="Tsuge Y."/>
            <person name="Watanabe J."/>
            <person name="Ikeda Y."/>
            <person name="Vertes A.A."/>
            <person name="Inui M."/>
        </authorList>
    </citation>
    <scope>NUCLEOTIDE SEQUENCE [LARGE SCALE GENOMIC DNA]</scope>
    <source>
        <strain>R</strain>
    </source>
</reference>
<feature type="chain" id="PRO_1000052564" description="Large ribosomal subunit protein uL22">
    <location>
        <begin position="1"/>
        <end position="120"/>
    </location>
</feature>
<dbReference type="EMBL" id="AP009044">
    <property type="protein sequence ID" value="BAF53583.1"/>
    <property type="molecule type" value="Genomic_DNA"/>
</dbReference>
<dbReference type="RefSeq" id="WP_003854297.1">
    <property type="nucleotide sequence ID" value="NC_009342.1"/>
</dbReference>
<dbReference type="SMR" id="A4QBI6"/>
<dbReference type="GeneID" id="1021515"/>
<dbReference type="KEGG" id="cgt:cgR_0613"/>
<dbReference type="HOGENOM" id="CLU_083987_3_2_11"/>
<dbReference type="PhylomeDB" id="A4QBI6"/>
<dbReference type="Proteomes" id="UP000006698">
    <property type="component" value="Chromosome"/>
</dbReference>
<dbReference type="GO" id="GO:0022625">
    <property type="term" value="C:cytosolic large ribosomal subunit"/>
    <property type="evidence" value="ECO:0007669"/>
    <property type="project" value="TreeGrafter"/>
</dbReference>
<dbReference type="GO" id="GO:0019843">
    <property type="term" value="F:rRNA binding"/>
    <property type="evidence" value="ECO:0007669"/>
    <property type="project" value="UniProtKB-UniRule"/>
</dbReference>
<dbReference type="GO" id="GO:0003735">
    <property type="term" value="F:structural constituent of ribosome"/>
    <property type="evidence" value="ECO:0007669"/>
    <property type="project" value="InterPro"/>
</dbReference>
<dbReference type="GO" id="GO:0006412">
    <property type="term" value="P:translation"/>
    <property type="evidence" value="ECO:0007669"/>
    <property type="project" value="UniProtKB-UniRule"/>
</dbReference>
<dbReference type="CDD" id="cd00336">
    <property type="entry name" value="Ribosomal_L22"/>
    <property type="match status" value="1"/>
</dbReference>
<dbReference type="FunFam" id="3.90.470.10:FF:000002">
    <property type="entry name" value="50S ribosomal protein L22"/>
    <property type="match status" value="1"/>
</dbReference>
<dbReference type="Gene3D" id="3.90.470.10">
    <property type="entry name" value="Ribosomal protein L22/L17"/>
    <property type="match status" value="1"/>
</dbReference>
<dbReference type="HAMAP" id="MF_01331_B">
    <property type="entry name" value="Ribosomal_uL22_B"/>
    <property type="match status" value="1"/>
</dbReference>
<dbReference type="InterPro" id="IPR001063">
    <property type="entry name" value="Ribosomal_uL22"/>
</dbReference>
<dbReference type="InterPro" id="IPR005727">
    <property type="entry name" value="Ribosomal_uL22_bac/chlpt-type"/>
</dbReference>
<dbReference type="InterPro" id="IPR047867">
    <property type="entry name" value="Ribosomal_uL22_bac/org-type"/>
</dbReference>
<dbReference type="InterPro" id="IPR018260">
    <property type="entry name" value="Ribosomal_uL22_CS"/>
</dbReference>
<dbReference type="InterPro" id="IPR036394">
    <property type="entry name" value="Ribosomal_uL22_sf"/>
</dbReference>
<dbReference type="NCBIfam" id="TIGR01044">
    <property type="entry name" value="rplV_bact"/>
    <property type="match status" value="1"/>
</dbReference>
<dbReference type="PANTHER" id="PTHR13501">
    <property type="entry name" value="CHLOROPLAST 50S RIBOSOMAL PROTEIN L22-RELATED"/>
    <property type="match status" value="1"/>
</dbReference>
<dbReference type="PANTHER" id="PTHR13501:SF8">
    <property type="entry name" value="LARGE RIBOSOMAL SUBUNIT PROTEIN UL22M"/>
    <property type="match status" value="1"/>
</dbReference>
<dbReference type="Pfam" id="PF00237">
    <property type="entry name" value="Ribosomal_L22"/>
    <property type="match status" value="1"/>
</dbReference>
<dbReference type="SUPFAM" id="SSF54843">
    <property type="entry name" value="Ribosomal protein L22"/>
    <property type="match status" value="1"/>
</dbReference>
<dbReference type="PROSITE" id="PS00464">
    <property type="entry name" value="RIBOSOMAL_L22"/>
    <property type="match status" value="1"/>
</dbReference>
<comment type="function">
    <text evidence="1">This protein binds specifically to 23S rRNA; its binding is stimulated by other ribosomal proteins, e.g. L4, L17, and L20. It is important during the early stages of 50S assembly. It makes multiple contacts with different domains of the 23S rRNA in the assembled 50S subunit and ribosome (By similarity).</text>
</comment>
<comment type="function">
    <text evidence="1">The globular domain of the protein is located near the polypeptide exit tunnel on the outside of the subunit, while an extended beta-hairpin is found that lines the wall of the exit tunnel in the center of the 70S ribosome.</text>
</comment>
<comment type="subunit">
    <text evidence="1">Part of the 50S ribosomal subunit.</text>
</comment>
<comment type="similarity">
    <text evidence="1">Belongs to the universal ribosomal protein uL22 family.</text>
</comment>